<sequence length="1359" mass="156743">MLQEQSELMSTVMNNTPTTVAALAAVAAASETNGKLGSEEQPEITIPKPRSSAQLEQLLYRYRAIQNHPKENKLEIKAIEDTFRNISRDQDIYETKLDTLRKSIDKGFQYDEDLLNKHLVALQLLEKDTDVPDYFLDLPDTKNDNTTAIEVDYSEKKPIKISADFNAKAKSLGLESKFSNATKTALGDPDTEIRISARISNRINELERLPANLGTYSLDDCLEFITKDDLSSRMDTFKIKALVELKSLKLLTKQKSIRQKLINNVASQAHHNIPYLRDSPFTAAAQRSVQIRSKVIVPQTVRLAEELERQQLLEKRKKERNLHLQKINSIIDFIKERQSEQWSRQERCFQFGRLGASLHNQMEKDEQKRIERTAKQRLAALKSNDEEAYLKLLDQTKDTRITQLLRQTNSFLDSLSEAVRAQQNEAKILHGEEVQPITDEEREKTDYYEVAHRIKEKIDKQPSILVGGTLKEYQLRGLEWMVSLYNNHLNGILADEMGLGKTIQSISLITYLYEVKKDIGPFLVIVPLSTITNWTLEFEKWAPSLNTIIYKGTPNQRHSLQHQIRVGNFDVLLTTYEYIIKDKSLLSKHDWAHMIIDEGHRMKNAQSKLSFTISHYYRTRNRLILTGTPLQNNLPELWALLNFVLPKIFNSAKTFEDWFNTPFANTGTQEKLELTEEETLLIIRRLHKVLRPFLLRRLKKEVEKDLPDKVEKVIKCKLSGLQQQLYQQMLKHNALFVGAGTEGATKGGIKGLNNKIMQLRKICNHPFVFDEVEGVVNPSRGNSDLLFRVAGKFELLDRVLPKFKASGHRVLMFFQMTQVMDIMEDFLRMKDLKYMRLDGSTKTEERTEMLNAFNAPDSDYFCFLLSTRAGGLGLNLQTADTVIIFDTDWNPHQDLQAQDRAHRIGQKNEVRILRLITTDSVEEVILERAMQKLDIDGKVIQAGKFDNKSTAEEQEAFLRRLIESETNRDDDDKAELDDDELNDTLARSADEKILFDKIDKERMNQERADAKAQGLRVPPPRLIQLDELPKVFREDIEEHFKKEDSEPLGRIRQKKRVYYDDGLTEEQFLEAVEDDNMSLEDAIKKRREARERRRLRQNGTKENEIETLENTPEASETSLIENNSFTAAVDEETNADKETTASRSKRRSSRKKRTISIVTAEDKENTQEESTSQENGGAKVEEEVKSSSVEIINGSESKKKKPKLTVKIKLNKTTVLENNDGKRAEEKPESKSPAKKTAAKKTKTKSKSLGIFPTVEKLVEEMREQLDEVDSHPRTSIFEKLPSKRDYPDYFKVIEKPMAIDIILKNCKNGTYKTLEEVRQALQTMFENARFYNEEGSWVYVDADKLNEFTDEWFKEHSS</sequence>
<gene>
    <name type="primary">STH1</name>
    <name type="synonym">NPS1</name>
    <name type="ordered locus">YIL126W</name>
</gene>
<dbReference type="EC" id="3.6.4.12"/>
<dbReference type="EMBL" id="D10595">
    <property type="protein sequence ID" value="BAA01446.1"/>
    <property type="molecule type" value="Genomic_DNA"/>
</dbReference>
<dbReference type="EMBL" id="M83755">
    <property type="protein sequence ID" value="AAA35120.1"/>
    <property type="molecule type" value="Genomic_DNA"/>
</dbReference>
<dbReference type="EMBL" id="DQ115392">
    <property type="protein sequence ID" value="AAZ22501.1"/>
    <property type="molecule type" value="Genomic_DNA"/>
</dbReference>
<dbReference type="EMBL" id="Z46833">
    <property type="protein sequence ID" value="CAA86866.1"/>
    <property type="molecule type" value="Genomic_DNA"/>
</dbReference>
<dbReference type="EMBL" id="BK006942">
    <property type="protein sequence ID" value="DAA08427.1"/>
    <property type="molecule type" value="Genomic_DNA"/>
</dbReference>
<dbReference type="PIR" id="S49883">
    <property type="entry name" value="S49883"/>
</dbReference>
<dbReference type="RefSeq" id="NP_012140.1">
    <property type="nucleotide sequence ID" value="NM_001179474.1"/>
</dbReference>
<dbReference type="PDB" id="6K15">
    <property type="method" value="EM"/>
    <property type="resolution" value="3.40 A"/>
    <property type="chains" value="J=1-1359"/>
</dbReference>
<dbReference type="PDB" id="6KMB">
    <property type="method" value="X-ray"/>
    <property type="resolution" value="2.40 A"/>
    <property type="chains" value="A/B/C/D=1248-1359"/>
</dbReference>
<dbReference type="PDB" id="6KMJ">
    <property type="method" value="X-ray"/>
    <property type="resolution" value="1.40 A"/>
    <property type="chains" value="A=1248-1359"/>
</dbReference>
<dbReference type="PDB" id="6KW3">
    <property type="method" value="EM"/>
    <property type="resolution" value="7.13 A"/>
    <property type="chains" value="J/W/Y=1-1359"/>
</dbReference>
<dbReference type="PDB" id="6KW4">
    <property type="method" value="EM"/>
    <property type="resolution" value="7.55 A"/>
    <property type="chains" value="J/V/Y=1-1359"/>
</dbReference>
<dbReference type="PDB" id="6KW5">
    <property type="method" value="EM"/>
    <property type="resolution" value="10.13 A"/>
    <property type="chains" value="J/P/Q=1-1359"/>
</dbReference>
<dbReference type="PDB" id="6LQZ">
    <property type="method" value="NMR"/>
    <property type="chains" value="B=1183-1240"/>
</dbReference>
<dbReference type="PDB" id="6MR4">
    <property type="method" value="X-ray"/>
    <property type="resolution" value="2.71 A"/>
    <property type="chains" value="A/B/C/D/E/F=1250-1359"/>
</dbReference>
<dbReference type="PDB" id="6TDA">
    <property type="method" value="EM"/>
    <property type="resolution" value="15.00 A"/>
    <property type="chains" value="S=1-1359"/>
</dbReference>
<dbReference type="PDB" id="6UY1">
    <property type="method" value="X-ray"/>
    <property type="resolution" value="2.21 A"/>
    <property type="chains" value="A/B/C/D/E/F/G/H=1250-1359"/>
</dbReference>
<dbReference type="PDB" id="6V8O">
    <property type="method" value="EM"/>
    <property type="resolution" value="3.07 A"/>
    <property type="chains" value="R=1-1359"/>
</dbReference>
<dbReference type="PDB" id="6V92">
    <property type="method" value="EM"/>
    <property type="resolution" value="20.00 A"/>
    <property type="chains" value="R=1-1359"/>
</dbReference>
<dbReference type="PDB" id="6VZ4">
    <property type="method" value="EM"/>
    <property type="resolution" value="3.90 A"/>
    <property type="chains" value="K=301-1097"/>
</dbReference>
<dbReference type="PDB" id="6VZG">
    <property type="method" value="EM"/>
    <property type="resolution" value="4.20 A"/>
    <property type="chains" value="K=301-1097"/>
</dbReference>
<dbReference type="PDB" id="7F3S">
    <property type="method" value="X-ray"/>
    <property type="resolution" value="1.40 A"/>
    <property type="chains" value="A=1248-1359"/>
</dbReference>
<dbReference type="PDBsum" id="6K15"/>
<dbReference type="PDBsum" id="6KMB"/>
<dbReference type="PDBsum" id="6KMJ"/>
<dbReference type="PDBsum" id="6KW3"/>
<dbReference type="PDBsum" id="6KW4"/>
<dbReference type="PDBsum" id="6KW5"/>
<dbReference type="PDBsum" id="6LQZ"/>
<dbReference type="PDBsum" id="6MR4"/>
<dbReference type="PDBsum" id="6TDA"/>
<dbReference type="PDBsum" id="6UY1"/>
<dbReference type="PDBsum" id="6V8O"/>
<dbReference type="PDBsum" id="6V92"/>
<dbReference type="PDBsum" id="6VZ4"/>
<dbReference type="PDBsum" id="6VZG"/>
<dbReference type="PDBsum" id="7F3S"/>
<dbReference type="EMDB" id="EMD-0777"/>
<dbReference type="EMDB" id="EMD-0778"/>
<dbReference type="EMDB" id="EMD-0779"/>
<dbReference type="EMDB" id="EMD-10465"/>
<dbReference type="EMDB" id="EMD-21107"/>
<dbReference type="EMDB" id="EMD-21114"/>
<dbReference type="EMDB" id="EMD-21484"/>
<dbReference type="EMDB" id="EMD-21489"/>
<dbReference type="EMDB" id="EMD-9905"/>
<dbReference type="SMR" id="P32597"/>
<dbReference type="BioGRID" id="34865">
    <property type="interactions" value="241"/>
</dbReference>
<dbReference type="ComplexPortal" id="CPX-1888">
    <property type="entry name" value="RSC chromatin remodelling complex, variant RSC2"/>
</dbReference>
<dbReference type="ComplexPortal" id="CPX-1889">
    <property type="entry name" value="RSC chromatin remodelling complex, variant RSC1"/>
</dbReference>
<dbReference type="DIP" id="DIP-5889N"/>
<dbReference type="FunCoup" id="P32597">
    <property type="interactions" value="1312"/>
</dbReference>
<dbReference type="IntAct" id="P32597">
    <property type="interactions" value="78"/>
</dbReference>
<dbReference type="MINT" id="P32597"/>
<dbReference type="STRING" id="4932.YIL126W"/>
<dbReference type="GlyGen" id="P32597">
    <property type="glycosylation" value="1 site"/>
</dbReference>
<dbReference type="iPTMnet" id="P32597"/>
<dbReference type="PaxDb" id="4932-YIL126W"/>
<dbReference type="PeptideAtlas" id="P32597"/>
<dbReference type="EnsemblFungi" id="YIL126W_mRNA">
    <property type="protein sequence ID" value="YIL126W"/>
    <property type="gene ID" value="YIL126W"/>
</dbReference>
<dbReference type="GeneID" id="854680"/>
<dbReference type="KEGG" id="sce:YIL126W"/>
<dbReference type="AGR" id="SGD:S000001388"/>
<dbReference type="SGD" id="S000001388">
    <property type="gene designation" value="STH1"/>
</dbReference>
<dbReference type="VEuPathDB" id="FungiDB:YIL126W"/>
<dbReference type="eggNOG" id="KOG0386">
    <property type="taxonomic scope" value="Eukaryota"/>
</dbReference>
<dbReference type="HOGENOM" id="CLU_000315_15_3_1"/>
<dbReference type="InParanoid" id="P32597"/>
<dbReference type="OMA" id="VNYISHT"/>
<dbReference type="OrthoDB" id="5857104at2759"/>
<dbReference type="BioCyc" id="YEAST:G3O-31377-MONOMER"/>
<dbReference type="BioGRID-ORCS" id="854680">
    <property type="hits" value="2 hits in 10 CRISPR screens"/>
</dbReference>
<dbReference type="PRO" id="PR:P32597"/>
<dbReference type="Proteomes" id="UP000002311">
    <property type="component" value="Chromosome IX"/>
</dbReference>
<dbReference type="RNAct" id="P32597">
    <property type="molecule type" value="protein"/>
</dbReference>
<dbReference type="GO" id="GO:0000785">
    <property type="term" value="C:chromatin"/>
    <property type="evidence" value="ECO:0000318"/>
    <property type="project" value="GO_Central"/>
</dbReference>
<dbReference type="GO" id="GO:0000775">
    <property type="term" value="C:chromosome, centromeric region"/>
    <property type="evidence" value="ECO:0000314"/>
    <property type="project" value="UniProtKB"/>
</dbReference>
<dbReference type="GO" id="GO:0005634">
    <property type="term" value="C:nucleus"/>
    <property type="evidence" value="ECO:0000314"/>
    <property type="project" value="SGD"/>
</dbReference>
<dbReference type="GO" id="GO:0016586">
    <property type="term" value="C:RSC-type complex"/>
    <property type="evidence" value="ECO:0000314"/>
    <property type="project" value="UniProtKB"/>
</dbReference>
<dbReference type="GO" id="GO:0005524">
    <property type="term" value="F:ATP binding"/>
    <property type="evidence" value="ECO:0007669"/>
    <property type="project" value="UniProtKB-KW"/>
</dbReference>
<dbReference type="GO" id="GO:0016887">
    <property type="term" value="F:ATP hydrolysis activity"/>
    <property type="evidence" value="ECO:0007669"/>
    <property type="project" value="RHEA"/>
</dbReference>
<dbReference type="GO" id="GO:0140658">
    <property type="term" value="F:ATP-dependent chromatin remodeler activity"/>
    <property type="evidence" value="ECO:0000314"/>
    <property type="project" value="SGD"/>
</dbReference>
<dbReference type="GO" id="GO:0003682">
    <property type="term" value="F:chromatin binding"/>
    <property type="evidence" value="ECO:0000318"/>
    <property type="project" value="GO_Central"/>
</dbReference>
<dbReference type="GO" id="GO:0003677">
    <property type="term" value="F:DNA binding"/>
    <property type="evidence" value="ECO:0000318"/>
    <property type="project" value="GO_Central"/>
</dbReference>
<dbReference type="GO" id="GO:0015616">
    <property type="term" value="F:DNA translocase activity"/>
    <property type="evidence" value="ECO:0000314"/>
    <property type="project" value="SGD"/>
</dbReference>
<dbReference type="GO" id="GO:0004386">
    <property type="term" value="F:helicase activity"/>
    <property type="evidence" value="ECO:0000314"/>
    <property type="project" value="UniProtKB"/>
</dbReference>
<dbReference type="GO" id="GO:0140008">
    <property type="term" value="F:histone H4 reader activity"/>
    <property type="evidence" value="ECO:0000314"/>
    <property type="project" value="GO_Central"/>
</dbReference>
<dbReference type="GO" id="GO:0070577">
    <property type="term" value="F:lysine-acetylated histone binding"/>
    <property type="evidence" value="ECO:0000314"/>
    <property type="project" value="SGD"/>
</dbReference>
<dbReference type="GO" id="GO:0140750">
    <property type="term" value="F:nucleosome array spacer activity"/>
    <property type="evidence" value="ECO:0000318"/>
    <property type="project" value="GO_Central"/>
</dbReference>
<dbReference type="GO" id="GO:0006284">
    <property type="term" value="P:base-excision repair"/>
    <property type="evidence" value="ECO:0000315"/>
    <property type="project" value="SGD"/>
</dbReference>
<dbReference type="GO" id="GO:0006338">
    <property type="term" value="P:chromatin remodeling"/>
    <property type="evidence" value="ECO:0000314"/>
    <property type="project" value="UniProtKB"/>
</dbReference>
<dbReference type="GO" id="GO:0031055">
    <property type="term" value="P:chromatin remodeling at centromere"/>
    <property type="evidence" value="ECO:0000315"/>
    <property type="project" value="SGD"/>
</dbReference>
<dbReference type="GO" id="GO:0007059">
    <property type="term" value="P:chromosome segregation"/>
    <property type="evidence" value="ECO:0000316"/>
    <property type="project" value="SGD"/>
</dbReference>
<dbReference type="GO" id="GO:0007010">
    <property type="term" value="P:cytoskeleton organization"/>
    <property type="evidence" value="ECO:0000315"/>
    <property type="project" value="SGD"/>
</dbReference>
<dbReference type="GO" id="GO:0006302">
    <property type="term" value="P:double-strand break repair"/>
    <property type="evidence" value="ECO:0000315"/>
    <property type="project" value="SGD"/>
</dbReference>
<dbReference type="GO" id="GO:0051321">
    <property type="term" value="P:meiotic cell cycle"/>
    <property type="evidence" value="ECO:0000315"/>
    <property type="project" value="UniProtKB"/>
</dbReference>
<dbReference type="GO" id="GO:0006337">
    <property type="term" value="P:nucleosome disassembly"/>
    <property type="evidence" value="ECO:0000314"/>
    <property type="project" value="SGD"/>
</dbReference>
<dbReference type="GO" id="GO:0045944">
    <property type="term" value="P:positive regulation of transcription by RNA polymerase II"/>
    <property type="evidence" value="ECO:0000318"/>
    <property type="project" value="GO_Central"/>
</dbReference>
<dbReference type="GO" id="GO:0006355">
    <property type="term" value="P:regulation of DNA-templated transcription"/>
    <property type="evidence" value="ECO:0000315"/>
    <property type="project" value="UniProtKB"/>
</dbReference>
<dbReference type="GO" id="GO:0006368">
    <property type="term" value="P:transcription elongation by RNA polymerase II"/>
    <property type="evidence" value="ECO:0000314"/>
    <property type="project" value="SGD"/>
</dbReference>
<dbReference type="CDD" id="cd04369">
    <property type="entry name" value="Bromodomain"/>
    <property type="match status" value="1"/>
</dbReference>
<dbReference type="CDD" id="cd17996">
    <property type="entry name" value="DEXHc_SMARCA2_SMARCA4"/>
    <property type="match status" value="1"/>
</dbReference>
<dbReference type="CDD" id="cd22568">
    <property type="entry name" value="EBM_STH1"/>
    <property type="match status" value="1"/>
</dbReference>
<dbReference type="CDD" id="cd18793">
    <property type="entry name" value="SF2_C_SNF"/>
    <property type="match status" value="1"/>
</dbReference>
<dbReference type="FunFam" id="1.20.920.10:FF:000073">
    <property type="entry name" value="Chromatin structure-remodeling complex subunit rsc4"/>
    <property type="match status" value="1"/>
</dbReference>
<dbReference type="FunFam" id="3.40.50.10810:FF:000008">
    <property type="entry name" value="Chromatin structure-remodeling complex subunit snf21"/>
    <property type="match status" value="1"/>
</dbReference>
<dbReference type="FunFam" id="3.40.50.300:FF:000843">
    <property type="entry name" value="Chromatin structure-remodeling complex subunit snf21"/>
    <property type="match status" value="1"/>
</dbReference>
<dbReference type="FunFam" id="1.20.5.170:FF:000113">
    <property type="entry name" value="Sth1p"/>
    <property type="match status" value="1"/>
</dbReference>
<dbReference type="Gene3D" id="1.20.5.170">
    <property type="match status" value="1"/>
</dbReference>
<dbReference type="Gene3D" id="1.20.920.10">
    <property type="entry name" value="Bromodomain-like"/>
    <property type="match status" value="1"/>
</dbReference>
<dbReference type="Gene3D" id="3.40.50.300">
    <property type="entry name" value="P-loop containing nucleotide triphosphate hydrolases"/>
    <property type="match status" value="1"/>
</dbReference>
<dbReference type="Gene3D" id="3.40.50.10810">
    <property type="entry name" value="Tandem AAA-ATPase domain"/>
    <property type="match status" value="1"/>
</dbReference>
<dbReference type="InterPro" id="IPR001487">
    <property type="entry name" value="Bromodomain"/>
</dbReference>
<dbReference type="InterPro" id="IPR036427">
    <property type="entry name" value="Bromodomain-like_sf"/>
</dbReference>
<dbReference type="InterPro" id="IPR018359">
    <property type="entry name" value="Bromodomain_CS"/>
</dbReference>
<dbReference type="InterPro" id="IPR014001">
    <property type="entry name" value="Helicase_ATP-bd"/>
</dbReference>
<dbReference type="InterPro" id="IPR001650">
    <property type="entry name" value="Helicase_C-like"/>
</dbReference>
<dbReference type="InterPro" id="IPR014012">
    <property type="entry name" value="HSA_dom"/>
</dbReference>
<dbReference type="InterPro" id="IPR027417">
    <property type="entry name" value="P-loop_NTPase"/>
</dbReference>
<dbReference type="InterPro" id="IPR029295">
    <property type="entry name" value="SnAC"/>
</dbReference>
<dbReference type="InterPro" id="IPR038718">
    <property type="entry name" value="SNF2-like_sf"/>
</dbReference>
<dbReference type="InterPro" id="IPR049730">
    <property type="entry name" value="SNF2/RAD54-like_C"/>
</dbReference>
<dbReference type="InterPro" id="IPR000330">
    <property type="entry name" value="SNF2_N"/>
</dbReference>
<dbReference type="PANTHER" id="PTHR10799">
    <property type="entry name" value="SNF2/RAD54 HELICASE FAMILY"/>
    <property type="match status" value="1"/>
</dbReference>
<dbReference type="Pfam" id="PF00439">
    <property type="entry name" value="Bromodomain"/>
    <property type="match status" value="1"/>
</dbReference>
<dbReference type="Pfam" id="PF00271">
    <property type="entry name" value="Helicase_C"/>
    <property type="match status" value="1"/>
</dbReference>
<dbReference type="Pfam" id="PF07529">
    <property type="entry name" value="HSA"/>
    <property type="match status" value="1"/>
</dbReference>
<dbReference type="Pfam" id="PF14619">
    <property type="entry name" value="SnAC"/>
    <property type="match status" value="1"/>
</dbReference>
<dbReference type="Pfam" id="PF00176">
    <property type="entry name" value="SNF2-rel_dom"/>
    <property type="match status" value="1"/>
</dbReference>
<dbReference type="PRINTS" id="PR00503">
    <property type="entry name" value="BROMODOMAIN"/>
</dbReference>
<dbReference type="SMART" id="SM00297">
    <property type="entry name" value="BROMO"/>
    <property type="match status" value="1"/>
</dbReference>
<dbReference type="SMART" id="SM00487">
    <property type="entry name" value="DEXDc"/>
    <property type="match status" value="1"/>
</dbReference>
<dbReference type="SMART" id="SM00490">
    <property type="entry name" value="HELICc"/>
    <property type="match status" value="1"/>
</dbReference>
<dbReference type="SMART" id="SM01314">
    <property type="entry name" value="SnAC"/>
    <property type="match status" value="1"/>
</dbReference>
<dbReference type="SUPFAM" id="SSF47370">
    <property type="entry name" value="Bromodomain"/>
    <property type="match status" value="1"/>
</dbReference>
<dbReference type="SUPFAM" id="SSF52540">
    <property type="entry name" value="P-loop containing nucleoside triphosphate hydrolases"/>
    <property type="match status" value="2"/>
</dbReference>
<dbReference type="PROSITE" id="PS00633">
    <property type="entry name" value="BROMODOMAIN_1"/>
    <property type="match status" value="1"/>
</dbReference>
<dbReference type="PROSITE" id="PS50014">
    <property type="entry name" value="BROMODOMAIN_2"/>
    <property type="match status" value="1"/>
</dbReference>
<dbReference type="PROSITE" id="PS51192">
    <property type="entry name" value="HELICASE_ATP_BIND_1"/>
    <property type="match status" value="1"/>
</dbReference>
<dbReference type="PROSITE" id="PS51194">
    <property type="entry name" value="HELICASE_CTER"/>
    <property type="match status" value="1"/>
</dbReference>
<dbReference type="PROSITE" id="PS51204">
    <property type="entry name" value="HSA"/>
    <property type="match status" value="1"/>
</dbReference>
<keyword id="KW-0002">3D-structure</keyword>
<keyword id="KW-0067">ATP-binding</keyword>
<keyword id="KW-0103">Bromodomain</keyword>
<keyword id="KW-0131">Cell cycle</keyword>
<keyword id="KW-0156">Chromatin regulator</keyword>
<keyword id="KW-0903">Direct protein sequencing</keyword>
<keyword id="KW-0347">Helicase</keyword>
<keyword id="KW-0378">Hydrolase</keyword>
<keyword id="KW-0547">Nucleotide-binding</keyword>
<keyword id="KW-0539">Nucleus</keyword>
<keyword id="KW-0597">Phosphoprotein</keyword>
<keyword id="KW-1185">Reference proteome</keyword>
<keyword id="KW-0804">Transcription</keyword>
<keyword id="KW-0805">Transcription regulation</keyword>
<name>STH1_YEAST</name>
<comment type="function">
    <text evidence="6 7 8 9 10 11 15 18">Catalytic component of the chromatin structure-remodeling complex (RSC), which is involved in transcription regulation and nucleosome positioning. RSC is responsible for the transfer of a histone octamer from a nucleosome core particle to naked DNA. The reaction requires ATP and involves an activated RSC-nucleosome intermediate. Remodeling reaction also involves DNA translocation, DNA twist and conformational change. As a reconfigurer of centromeric and flanking nucleosomes, RSC complex is required both for proper kinetochore function in chromosome segregation and, via a PKC1-dependent signaling pathway, for organization of the cellular cytoskeleton. This subunit is the essential ATPase of the complex. It is a DNA translocase capable of nucleosome remodeling. Required for full expression of early meiotic genes. Essential for mitotic growth and repression of CHA1 expression. Also involved in G2 phase control.</text>
</comment>
<comment type="catalytic activity">
    <reaction>
        <text>ATP + H2O = ADP + phosphate + H(+)</text>
        <dbReference type="Rhea" id="RHEA:13065"/>
        <dbReference type="ChEBI" id="CHEBI:15377"/>
        <dbReference type="ChEBI" id="CHEBI:15378"/>
        <dbReference type="ChEBI" id="CHEBI:30616"/>
        <dbReference type="ChEBI" id="CHEBI:43474"/>
        <dbReference type="ChEBI" id="CHEBI:456216"/>
        <dbReference type="EC" id="3.6.4.12"/>
    </reaction>
</comment>
<comment type="subunit">
    <text evidence="11 13 14 15 16 17">Interacts directly with SFH1, CSE4, histones H3, H4 and H2B, and via its N-terminus, with RSC8. Interacts with LDB7, NPL6 and RTT102. Component of the two forms of the RSC complex composed of at least either RSC1 or RSC2, and ARP7, ARP9, LDB7, NPL6, RSC3, RSC30, RSC4, RSC58, RSC6, RSC8, RSC9, SFH1, STH1, HTL1 and probably RTT102. The complexes interact with histone and histone variant components of centromeric chromatin.</text>
</comment>
<comment type="interaction">
    <interactant intactId="EBI-18410">
        <id>P32597</id>
    </interactant>
    <interactant intactId="EBI-8113">
        <id>P02309</id>
        <label>HHF2</label>
    </interactant>
    <organismsDiffer>false</organismsDiffer>
    <experiments>6</experiments>
</comment>
<comment type="interaction">
    <interactant intactId="EBI-18410">
        <id>P32597</id>
    </interactant>
    <interactant intactId="EBI-8098">
        <id>P61830</id>
        <label>HHT2</label>
    </interactant>
    <organismsDiffer>false</organismsDiffer>
    <experiments>6</experiments>
</comment>
<comment type="interaction">
    <interactant intactId="EBI-18410">
        <id>P32597</id>
    </interactant>
    <interactant intactId="EBI-8088">
        <id>P02293</id>
        <label>HTB1</label>
    </interactant>
    <organismsDiffer>false</organismsDiffer>
    <experiments>4</experiments>
</comment>
<comment type="interaction">
    <interactant intactId="EBI-18410">
        <id>P32597</id>
    </interactant>
    <interactant intactId="EBI-8717">
        <id>Q9URQ5</id>
        <label>HTL1</label>
    </interactant>
    <organismsDiffer>false</organismsDiffer>
    <experiments>4</experiments>
</comment>
<comment type="interaction">
    <interactant intactId="EBI-18410">
        <id>P32597</id>
    </interactant>
    <interactant intactId="EBI-21189">
        <id>P38210</id>
        <label>LDB7</label>
    </interactant>
    <organismsDiffer>false</organismsDiffer>
    <experiments>3</experiments>
</comment>
<comment type="interaction">
    <interactant intactId="EBI-18410">
        <id>P32597</id>
    </interactant>
    <interactant intactId="EBI-12019">
        <id>P11632</id>
        <label>NHP6A</label>
    </interactant>
    <organismsDiffer>false</organismsDiffer>
    <experiments>3</experiments>
</comment>
<comment type="interaction">
    <interactant intactId="EBI-18410">
        <id>P32597</id>
    </interactant>
    <interactant intactId="EBI-11756">
        <id>P38181</id>
        <label>NUP170</label>
    </interactant>
    <organismsDiffer>false</organismsDiffer>
    <experiments>3</experiments>
</comment>
<comment type="interaction">
    <interactant intactId="EBI-18410">
        <id>P32597</id>
    </interactant>
    <interactant intactId="EBI-36549">
        <id>Q07979</id>
        <label>RSC58</label>
    </interactant>
    <organismsDiffer>false</organismsDiffer>
    <experiments>7</experiments>
</comment>
<comment type="interaction">
    <interactant intactId="EBI-18410">
        <id>P32597</id>
    </interactant>
    <interactant intactId="EBI-23637">
        <id>P53330</id>
        <label>RTT102</label>
    </interactant>
    <organismsDiffer>false</organismsDiffer>
    <experiments>6</experiments>
</comment>
<comment type="subcellular location">
    <subcellularLocation>
        <location evidence="4 11">Nucleus</location>
    </subcellularLocation>
    <text>Localizes to centromeric and flanking chromatin. Association of the RSC complex with these loci is dependent on this subunit.</text>
</comment>
<comment type="miscellaneous">
    <text evidence="12">Present with 1990 molecules/cell in log phase SD medium.</text>
</comment>
<comment type="similarity">
    <text evidence="19">Belongs to the SNF2/RAD54 helicase family.</text>
</comment>
<proteinExistence type="evidence at protein level"/>
<protein>
    <recommendedName>
        <fullName>Nuclear protein STH1/NPS1</fullName>
        <ecNumber>3.6.4.12</ecNumber>
    </recommendedName>
    <alternativeName>
        <fullName>ATP-dependent helicase STH1</fullName>
    </alternativeName>
    <alternativeName>
        <fullName>Chromatin structure-remodeling complex protein STH1</fullName>
    </alternativeName>
    <alternativeName>
        <fullName>SNF2 homolog</fullName>
    </alternativeName>
</protein>
<reference key="1">
    <citation type="journal article" date="1992" name="EMBO J.">
        <title>The Saccharomyces cerevisiae NPS1 gene, a novel CDC gene which encodes a 160 kDa nuclear protein involved in G2 phase control.</title>
        <authorList>
            <person name="Tsuchiya E."/>
            <person name="Uno M."/>
            <person name="Kiguchi A."/>
            <person name="Masuoka K."/>
            <person name="Kanemori Y."/>
            <person name="Okabe S."/>
            <person name="Miyakawa T."/>
        </authorList>
    </citation>
    <scope>NUCLEOTIDE SEQUENCE [GENOMIC DNA]</scope>
</reference>
<reference key="2">
    <citation type="journal article" date="1992" name="Mol. Cell. Biol.">
        <title>An essential Saccharomyces cerevisiae gene homologous to SNF2 encodes a helicase-related protein in a new family.</title>
        <authorList>
            <person name="Laurent B.C."/>
            <person name="Yang X."/>
            <person name="Carlson M."/>
        </authorList>
    </citation>
    <scope>NUCLEOTIDE SEQUENCE [GENOMIC DNA]</scope>
</reference>
<reference key="3">
    <citation type="journal article" date="2005" name="Nat. Genet.">
        <title>Quantitative trait loci mapped to single-nucleotide resolution in yeast.</title>
        <authorList>
            <person name="Deutschbauer A.M."/>
            <person name="Davis R.W."/>
        </authorList>
    </citation>
    <scope>NUCLEOTIDE SEQUENCE [GENOMIC DNA]</scope>
    <source>
        <strain>SK1</strain>
    </source>
</reference>
<reference key="4">
    <citation type="journal article" date="1997" name="Nature">
        <title>The nucleotide sequence of Saccharomyces cerevisiae chromosome IX.</title>
        <authorList>
            <person name="Churcher C.M."/>
            <person name="Bowman S."/>
            <person name="Badcock K."/>
            <person name="Bankier A.T."/>
            <person name="Brown D."/>
            <person name="Chillingworth T."/>
            <person name="Connor R."/>
            <person name="Devlin K."/>
            <person name="Gentles S."/>
            <person name="Hamlin N."/>
            <person name="Harris D.E."/>
            <person name="Horsnell T."/>
            <person name="Hunt S."/>
            <person name="Jagels K."/>
            <person name="Jones M."/>
            <person name="Lye G."/>
            <person name="Moule S."/>
            <person name="Odell C."/>
            <person name="Pearson D."/>
            <person name="Rajandream M.A."/>
            <person name="Rice P."/>
            <person name="Rowley N."/>
            <person name="Skelton J."/>
            <person name="Smith V."/>
            <person name="Walsh S.V."/>
            <person name="Whitehead S."/>
            <person name="Barrell B.G."/>
        </authorList>
    </citation>
    <scope>NUCLEOTIDE SEQUENCE [LARGE SCALE GENOMIC DNA]</scope>
    <source>
        <strain>ATCC 204508 / S288c</strain>
    </source>
</reference>
<reference key="5">
    <citation type="journal article" date="2014" name="G3 (Bethesda)">
        <title>The reference genome sequence of Saccharomyces cerevisiae: Then and now.</title>
        <authorList>
            <person name="Engel S.R."/>
            <person name="Dietrich F.S."/>
            <person name="Fisk D.G."/>
            <person name="Binkley G."/>
            <person name="Balakrishnan R."/>
            <person name="Costanzo M.C."/>
            <person name="Dwight S.S."/>
            <person name="Hitz B.C."/>
            <person name="Karra K."/>
            <person name="Nash R.S."/>
            <person name="Weng S."/>
            <person name="Wong E.D."/>
            <person name="Lloyd P."/>
            <person name="Skrzypek M.S."/>
            <person name="Miyasato S.R."/>
            <person name="Simison M."/>
            <person name="Cherry J.M."/>
        </authorList>
    </citation>
    <scope>GENOME REANNOTATION</scope>
    <source>
        <strain>ATCC 204508 / S288c</strain>
    </source>
</reference>
<reference key="6">
    <citation type="journal article" date="1996" name="Cell">
        <title>RSC, an essential, abundant chromatin-remodeling complex.</title>
        <authorList>
            <person name="Cairns B.R."/>
            <person name="Lorch Y."/>
            <person name="Li Y."/>
            <person name="Zhang M."/>
            <person name="Lacomis L."/>
            <person name="Erdjument-Bromage H."/>
            <person name="Tempst P."/>
            <person name="Du J."/>
            <person name="Laurent B.C."/>
            <person name="Kornberg R.D."/>
        </authorList>
    </citation>
    <scope>PROTEIN SEQUENCE OF 961-987 AND 993-1002</scope>
    <scope>IDENTIFICATION IN THE RSC COMPLEX</scope>
    <scope>FUNCTION OF THE RSC COMPLEX</scope>
</reference>
<reference key="7">
    <citation type="journal article" date="1997" name="Mol. Cell. Biol.">
        <title>Interaction of a Swi3 homolog with Sth1 provides evidence for a Swi/Snf-related complex with an essential function in Saccharomyces cerevisiae.</title>
        <authorList>
            <person name="Treich I."/>
            <person name="Carlson M."/>
        </authorList>
    </citation>
    <scope>INTERACTION WITH RSC8</scope>
</reference>
<reference key="8">
    <citation type="journal article" date="1997" name="Mol. Cell. Biol.">
        <title>Sfh1p, a component of a novel chromatin-remodeling complex, is required for cell cycle progression.</title>
        <authorList>
            <person name="Cao Y."/>
            <person name="Cairns B.R."/>
            <person name="Kornberg R.D."/>
            <person name="Laurent B.C."/>
        </authorList>
    </citation>
    <scope>INTERACTION WITH SFH1</scope>
</reference>
<reference key="9">
    <citation type="journal article" date="1998" name="Genetics">
        <title>Sth1p, a Saccharomyces cerevisiae Snf2p/Swi2p homolog, is an essential ATPase in RSC and differs from Snf/Swi in its interactions with histones and chromatin-associated proteins.</title>
        <authorList>
            <person name="Du J."/>
            <person name="Nasir I."/>
            <person name="Benton B.K."/>
            <person name="Kladde M.P."/>
            <person name="Laurent B.C."/>
        </authorList>
    </citation>
    <scope>FUNCTION</scope>
    <scope>MUTAGENESIS OF SER-505; PRO-646; SER-806 AND THR-881</scope>
</reference>
<reference key="10">
    <citation type="journal article" date="1999" name="Cell">
        <title>Histone octamer transfer by a chromatin-remodeling complex.</title>
        <authorList>
            <person name="Lorch Y."/>
            <person name="Zhang M."/>
            <person name="Kornberg R.D."/>
        </authorList>
    </citation>
    <scope>FUNCTION OF THE RSC COMPLEX</scope>
</reference>
<reference key="11">
    <citation type="journal article" date="1999" name="EMBO J.">
        <title>Transcriptional repression of the yeast CHA1 gene requires the chromatin-remodeling complex RSC.</title>
        <authorList>
            <person name="Moreira J.M.A."/>
            <person name="Holmberg S."/>
        </authorList>
    </citation>
    <scope>FUNCTION</scope>
</reference>
<reference key="12">
    <citation type="journal article" date="1999" name="Genes Cells">
        <title>Nps1/Sth1p, a component of an essential chromatin-remodeling complex of Saccharomyces cerevisiae, is required for the maximal expression of early meiotic genes.</title>
        <authorList>
            <person name="Yukawa M."/>
            <person name="Katoh S."/>
            <person name="Miyakawa T."/>
            <person name="Tsuchiya E."/>
        </authorList>
    </citation>
    <scope>FUNCTION</scope>
    <scope>MUTAGENESIS OF CYS-763</scope>
</reference>
<reference key="13">
    <citation type="journal article" date="1999" name="Mol. Cell">
        <title>Two functionally distinct forms of the RSC nucleosome-remodeling complex, containing essential AT hook, BAH, and bromodomains.</title>
        <authorList>
            <person name="Cairns B.R."/>
            <person name="Schlichter A."/>
            <person name="Erdjument-Bromage H."/>
            <person name="Tempst P."/>
            <person name="Kornberg R.D."/>
            <person name="Winston F."/>
        </authorList>
    </citation>
    <scope>COMPOSITION OF THE RSC COMPLEX</scope>
</reference>
<reference key="14">
    <citation type="journal article" date="2002" name="Genes Dev.">
        <title>Chromatin remodeling by RSC involves ATP-dependent DNA translocation.</title>
        <authorList>
            <person name="Saha A."/>
            <person name="Wittmeyer J."/>
            <person name="Cairns B.R."/>
        </authorList>
    </citation>
    <scope>FUNCTION</scope>
</reference>
<reference key="15">
    <citation type="journal article" date="2002" name="Genetics">
        <title>Yeast RSC function is required for organization of the cellular cytoskeleton via an alternative PKC1 pathway.</title>
        <authorList>
            <person name="Chai B."/>
            <person name="Hsu J.-M."/>
            <person name="Du J."/>
            <person name="Laurent B.C."/>
        </authorList>
    </citation>
    <scope>FUNCTION OF THE RSC COMPLEX</scope>
</reference>
<reference key="16">
    <citation type="journal article" date="2003" name="Mol. Cell. Biol.">
        <title>The yeast RSC chromatin-remodeling complex is required for kinetochore function in chromosome segregation.</title>
        <authorList>
            <person name="Hsu J.-M."/>
            <person name="Huang J."/>
            <person name="Meluh P.B."/>
            <person name="Laurent B.C."/>
        </authorList>
    </citation>
    <scope>FUNCTION OF THE RSC COMPLEX</scope>
    <scope>INTERACTION WITH CSE4 AND HISTONES H3; H4 AND H2B</scope>
    <scope>SUBCELLULAR LOCATION</scope>
</reference>
<reference key="17">
    <citation type="journal article" date="2003" name="Nature">
        <title>Global analysis of protein expression in yeast.</title>
        <authorList>
            <person name="Ghaemmaghami S."/>
            <person name="Huh W.-K."/>
            <person name="Bower K."/>
            <person name="Howson R.W."/>
            <person name="Belle A."/>
            <person name="Dephoure N."/>
            <person name="O'Shea E.K."/>
            <person name="Weissman J.S."/>
        </authorList>
    </citation>
    <scope>LEVEL OF PROTEIN EXPRESSION [LARGE SCALE ANALYSIS]</scope>
</reference>
<reference key="18">
    <citation type="journal article" date="2004" name="Biochem. Soc. Trans.">
        <title>Proteomic analysis of chromatin-modifying complexes in Saccharomyces cerevisiae identifies novel subunits.</title>
        <authorList>
            <person name="Lee K.K."/>
            <person name="Prochasson P."/>
            <person name="Florens L."/>
            <person name="Swanson S.K."/>
            <person name="Washburn M.P."/>
            <person name="Workman J.L."/>
        </authorList>
    </citation>
    <scope>INTERACTION WITH RTT102</scope>
</reference>
<reference key="19">
    <citation type="journal article" date="2005" name="Mol. Cell. Proteomics">
        <title>Quantitative phosphoproteomics applied to the yeast pheromone signaling pathway.</title>
        <authorList>
            <person name="Gruhler A."/>
            <person name="Olsen J.V."/>
            <person name="Mohammed S."/>
            <person name="Mortensen P."/>
            <person name="Faergeman N.J."/>
            <person name="Mann M."/>
            <person name="Jensen O.N."/>
        </authorList>
    </citation>
    <scope>IDENTIFICATION BY MASS SPECTROMETRY [LARGE SCALE ANALYSIS]</scope>
    <source>
        <strain>YAL6B</strain>
    </source>
</reference>
<reference key="20">
    <citation type="journal article" date="2006" name="Genetics">
        <title>The RSC chromatin remodeling complex bears an essential fungal-specific protein module with broad functional roles.</title>
        <authorList>
            <person name="Wilson B."/>
            <person name="Erdjument-Bromage H."/>
            <person name="Tempst P."/>
            <person name="Cairns B.R."/>
        </authorList>
    </citation>
    <scope>INTERACTION WITH LDB7 AND NPL6</scope>
</reference>
<reference key="21">
    <citation type="journal article" date="2007" name="J. Proteome Res.">
        <title>Large-scale phosphorylation analysis of alpha-factor-arrested Saccharomyces cerevisiae.</title>
        <authorList>
            <person name="Li X."/>
            <person name="Gerber S.A."/>
            <person name="Rudner A.D."/>
            <person name="Beausoleil S.A."/>
            <person name="Haas W."/>
            <person name="Villen J."/>
            <person name="Elias J.E."/>
            <person name="Gygi S.P."/>
        </authorList>
    </citation>
    <scope>IDENTIFICATION BY MASS SPECTROMETRY [LARGE SCALE ANALYSIS]</scope>
    <source>
        <strain>ADR376</strain>
    </source>
</reference>
<reference key="22">
    <citation type="journal article" date="2008" name="Mol. Cell. Proteomics">
        <title>A multidimensional chromatography technology for in-depth phosphoproteome analysis.</title>
        <authorList>
            <person name="Albuquerque C.P."/>
            <person name="Smolka M.B."/>
            <person name="Payne S.H."/>
            <person name="Bafna V."/>
            <person name="Eng J."/>
            <person name="Zhou H."/>
        </authorList>
    </citation>
    <scope>PHOSPHORYLATION [LARGE SCALE ANALYSIS] AT SER-38</scope>
    <scope>IDENTIFICATION BY MASS SPECTROMETRY [LARGE SCALE ANALYSIS]</scope>
</reference>
<reference key="23">
    <citation type="journal article" date="2009" name="Science">
        <title>Global analysis of Cdk1 substrate phosphorylation sites provides insights into evolution.</title>
        <authorList>
            <person name="Holt L.J."/>
            <person name="Tuch B.B."/>
            <person name="Villen J."/>
            <person name="Johnson A.D."/>
            <person name="Gygi S.P."/>
            <person name="Morgan D.O."/>
        </authorList>
    </citation>
    <scope>IDENTIFICATION BY MASS SPECTROMETRY [LARGE SCALE ANALYSIS]</scope>
</reference>
<evidence type="ECO:0000255" key="1">
    <source>
        <dbReference type="PROSITE-ProRule" id="PRU00035"/>
    </source>
</evidence>
<evidence type="ECO:0000255" key="2">
    <source>
        <dbReference type="PROSITE-ProRule" id="PRU00541"/>
    </source>
</evidence>
<evidence type="ECO:0000255" key="3">
    <source>
        <dbReference type="PROSITE-ProRule" id="PRU00542"/>
    </source>
</evidence>
<evidence type="ECO:0000255" key="4">
    <source>
        <dbReference type="PROSITE-ProRule" id="PRU00549"/>
    </source>
</evidence>
<evidence type="ECO:0000256" key="5">
    <source>
        <dbReference type="SAM" id="MobiDB-lite"/>
    </source>
</evidence>
<evidence type="ECO:0000269" key="6">
    <source>
    </source>
</evidence>
<evidence type="ECO:0000269" key="7">
    <source>
    </source>
</evidence>
<evidence type="ECO:0000269" key="8">
    <source>
    </source>
</evidence>
<evidence type="ECO:0000269" key="9">
    <source>
    </source>
</evidence>
<evidence type="ECO:0000269" key="10">
    <source>
    </source>
</evidence>
<evidence type="ECO:0000269" key="11">
    <source>
    </source>
</evidence>
<evidence type="ECO:0000269" key="12">
    <source>
    </source>
</evidence>
<evidence type="ECO:0000269" key="13">
    <source>
    </source>
</evidence>
<evidence type="ECO:0000269" key="14">
    <source>
    </source>
</evidence>
<evidence type="ECO:0000269" key="15">
    <source>
    </source>
</evidence>
<evidence type="ECO:0000269" key="16">
    <source>
    </source>
</evidence>
<evidence type="ECO:0000269" key="17">
    <source>
    </source>
</evidence>
<evidence type="ECO:0000269" key="18">
    <source>
    </source>
</evidence>
<evidence type="ECO:0000305" key="19"/>
<evidence type="ECO:0007744" key="20">
    <source>
    </source>
</evidence>
<evidence type="ECO:0007829" key="21">
    <source>
        <dbReference type="PDB" id="6K15"/>
    </source>
</evidence>
<evidence type="ECO:0007829" key="22">
    <source>
        <dbReference type="PDB" id="6KMJ"/>
    </source>
</evidence>
<evidence type="ECO:0007829" key="23">
    <source>
        <dbReference type="PDB" id="6LQZ"/>
    </source>
</evidence>
<evidence type="ECO:0007829" key="24">
    <source>
        <dbReference type="PDB" id="6V8O"/>
    </source>
</evidence>
<organism>
    <name type="scientific">Saccharomyces cerevisiae (strain ATCC 204508 / S288c)</name>
    <name type="common">Baker's yeast</name>
    <dbReference type="NCBI Taxonomy" id="559292"/>
    <lineage>
        <taxon>Eukaryota</taxon>
        <taxon>Fungi</taxon>
        <taxon>Dikarya</taxon>
        <taxon>Ascomycota</taxon>
        <taxon>Saccharomycotina</taxon>
        <taxon>Saccharomycetes</taxon>
        <taxon>Saccharomycetales</taxon>
        <taxon>Saccharomycetaceae</taxon>
        <taxon>Saccharomyces</taxon>
    </lineage>
</organism>
<feature type="chain" id="PRO_0000074361" description="Nuclear protein STH1/NPS1">
    <location>
        <begin position="1"/>
        <end position="1359"/>
    </location>
</feature>
<feature type="domain" description="HSA" evidence="4">
    <location>
        <begin position="307"/>
        <end position="383"/>
    </location>
</feature>
<feature type="domain" description="Helicase ATP-binding" evidence="2">
    <location>
        <begin position="482"/>
        <end position="647"/>
    </location>
</feature>
<feature type="domain" description="Helicase C-terminal" evidence="3">
    <location>
        <begin position="795"/>
        <end position="956"/>
    </location>
</feature>
<feature type="domain" description="Bromo" evidence="1">
    <location>
        <begin position="1257"/>
        <end position="1357"/>
    </location>
</feature>
<feature type="region of interest" description="Disordered" evidence="5">
    <location>
        <begin position="1090"/>
        <end position="1246"/>
    </location>
</feature>
<feature type="short sequence motif" description="DEGH box">
    <location>
        <begin position="597"/>
        <end position="600"/>
    </location>
</feature>
<feature type="compositionally biased region" description="Polar residues" evidence="5">
    <location>
        <begin position="1108"/>
        <end position="1126"/>
    </location>
</feature>
<feature type="compositionally biased region" description="Basic residues" evidence="5">
    <location>
        <begin position="1143"/>
        <end position="1154"/>
    </location>
</feature>
<feature type="compositionally biased region" description="Basic residues" evidence="5">
    <location>
        <begin position="1198"/>
        <end position="1210"/>
    </location>
</feature>
<feature type="compositionally biased region" description="Basic and acidic residues" evidence="5">
    <location>
        <begin position="1219"/>
        <end position="1232"/>
    </location>
</feature>
<feature type="compositionally biased region" description="Basic residues" evidence="5">
    <location>
        <begin position="1233"/>
        <end position="1246"/>
    </location>
</feature>
<feature type="binding site" evidence="19">
    <location>
        <begin position="495"/>
        <end position="502"/>
    </location>
    <ligand>
        <name>ATP</name>
        <dbReference type="ChEBI" id="CHEBI:30616"/>
    </ligand>
</feature>
<feature type="modified residue" description="Phosphoserine" evidence="20">
    <location>
        <position position="38"/>
    </location>
</feature>
<feature type="mutagenesis site" description="Temperature-sensitive." evidence="18">
    <original>S</original>
    <variation>F</variation>
    <location>
        <position position="505"/>
    </location>
</feature>
<feature type="mutagenesis site" description="Temperature-sensitive." evidence="18">
    <original>P</original>
    <variation>L</variation>
    <location>
        <position position="646"/>
    </location>
</feature>
<feature type="mutagenesis site" description="Temperature-sensitive. Reduced sporulation efficiency." evidence="7">
    <original>C</original>
    <variation>Y</variation>
    <location>
        <position position="763"/>
    </location>
</feature>
<feature type="mutagenesis site" description="Complete inactivation.">
    <original>K</original>
    <variation>E</variation>
    <location>
        <position position="792"/>
    </location>
</feature>
<feature type="mutagenesis site" description="Temperature-sensitive; when associated with M-881. Altered cell cycle distribution." evidence="18">
    <original>S</original>
    <variation>L</variation>
    <location>
        <position position="806"/>
    </location>
</feature>
<feature type="mutagenesis site" description="Temperature-sensitive; when associated with L-806. Altered cell cycle distribution." evidence="18">
    <original>T</original>
    <variation>M</variation>
    <location>
        <position position="881"/>
    </location>
</feature>
<feature type="sequence conflict" description="In Ref. 3; AAZ22501." evidence="19" ref="3">
    <original>DK</original>
    <variation>NE</variation>
    <location>
        <begin position="105"/>
        <end position="106"/>
    </location>
</feature>
<feature type="sequence conflict" description="In Ref. 3; AAZ22501." evidence="19" ref="3">
    <original>D</original>
    <variation>N</variation>
    <location>
        <position position="144"/>
    </location>
</feature>
<feature type="sequence conflict" description="In Ref. 3; AAZ22501." evidence="19" ref="3">
    <original>K</original>
    <variation>R</variation>
    <location>
        <position position="227"/>
    </location>
</feature>
<feature type="sequence conflict" description="In Ref. 2; AAA35120." evidence="19" ref="2">
    <original>N</original>
    <variation>T</variation>
    <location>
        <position position="546"/>
    </location>
</feature>
<feature type="sequence conflict" description="In Ref. 3; AAZ22501." evidence="19" ref="3">
    <original>V</original>
    <variation>I</variation>
    <location>
        <position position="566"/>
    </location>
</feature>
<feature type="sequence conflict" description="In Ref. 2; AAA35120." evidence="19" ref="2">
    <original>A</original>
    <variation>R</variation>
    <location>
        <position position="1010"/>
    </location>
</feature>
<feature type="sequence conflict" description="In Ref. 2." evidence="19" ref="2">
    <location>
        <begin position="1074"/>
        <end position="1080"/>
    </location>
</feature>
<feature type="sequence conflict" description="In Ref. 3; AAZ22501." evidence="19" ref="3">
    <original>A</original>
    <variation>V</variation>
    <location>
        <position position="1114"/>
    </location>
</feature>
<feature type="sequence conflict" description="In Ref. 3; AAZ22501." evidence="19" ref="3">
    <original>I</original>
    <variation>V</variation>
    <location>
        <position position="1157"/>
    </location>
</feature>
<feature type="sequence conflict" description="In Ref. 3; AAZ22501." evidence="19" ref="3">
    <original>G</original>
    <variation>S</variation>
    <location>
        <position position="1221"/>
    </location>
</feature>
<feature type="sequence conflict" description="In Ref. 3; AAZ22501." evidence="19" ref="3">
    <original>S</original>
    <variation>P</variation>
    <location>
        <position position="1246"/>
    </location>
</feature>
<feature type="helix" evidence="21">
    <location>
        <begin position="4"/>
        <end position="13"/>
    </location>
</feature>
<feature type="turn" evidence="21">
    <location>
        <begin position="18"/>
        <end position="20"/>
    </location>
</feature>
<feature type="helix" evidence="21">
    <location>
        <begin position="21"/>
        <end position="23"/>
    </location>
</feature>
<feature type="turn" evidence="21">
    <location>
        <begin position="26"/>
        <end position="33"/>
    </location>
</feature>
<feature type="helix" evidence="24">
    <location>
        <begin position="52"/>
        <end position="65"/>
    </location>
</feature>
<feature type="helix" evidence="24">
    <location>
        <begin position="69"/>
        <end position="72"/>
    </location>
</feature>
<feature type="helix" evidence="24">
    <location>
        <begin position="75"/>
        <end position="101"/>
    </location>
</feature>
<feature type="helix" evidence="24">
    <location>
        <begin position="112"/>
        <end position="126"/>
    </location>
</feature>
<feature type="helix" evidence="24">
    <location>
        <begin position="133"/>
        <end position="135"/>
    </location>
</feature>
<feature type="helix" evidence="24">
    <location>
        <begin position="167"/>
        <end position="171"/>
    </location>
</feature>
<feature type="helix" evidence="24">
    <location>
        <begin position="176"/>
        <end position="178"/>
    </location>
</feature>
<feature type="strand" evidence="24">
    <location>
        <begin position="179"/>
        <end position="181"/>
    </location>
</feature>
<feature type="helix" evidence="24">
    <location>
        <begin position="189"/>
        <end position="207"/>
    </location>
</feature>
<feature type="strand" evidence="24">
    <location>
        <begin position="209"/>
        <end position="211"/>
    </location>
</feature>
<feature type="turn" evidence="24">
    <location>
        <begin position="220"/>
        <end position="224"/>
    </location>
</feature>
<feature type="strand" evidence="24">
    <location>
        <begin position="227"/>
        <end position="229"/>
    </location>
</feature>
<feature type="strand" evidence="24">
    <location>
        <begin position="234"/>
        <end position="236"/>
    </location>
</feature>
<feature type="helix" evidence="24">
    <location>
        <begin position="237"/>
        <end position="249"/>
    </location>
</feature>
<feature type="helix" evidence="24">
    <location>
        <begin position="251"/>
        <end position="266"/>
    </location>
</feature>
<feature type="helix" evidence="24">
    <location>
        <begin position="269"/>
        <end position="272"/>
    </location>
</feature>
<feature type="helix" evidence="24">
    <location>
        <begin position="274"/>
        <end position="277"/>
    </location>
</feature>
<feature type="helix" evidence="24">
    <location>
        <begin position="280"/>
        <end position="289"/>
    </location>
</feature>
<feature type="helix" evidence="24">
    <location>
        <begin position="299"/>
        <end position="317"/>
    </location>
</feature>
<feature type="strand" evidence="23">
    <location>
        <begin position="1205"/>
        <end position="1209"/>
    </location>
</feature>
<feature type="strand" evidence="23">
    <location>
        <begin position="1213"/>
        <end position="1215"/>
    </location>
</feature>
<feature type="helix" evidence="22">
    <location>
        <begin position="1252"/>
        <end position="1263"/>
    </location>
</feature>
<feature type="turn" evidence="22">
    <location>
        <begin position="1268"/>
        <end position="1270"/>
    </location>
</feature>
<feature type="helix" evidence="22">
    <location>
        <begin position="1276"/>
        <end position="1278"/>
    </location>
</feature>
<feature type="turn" evidence="22">
    <location>
        <begin position="1284"/>
        <end position="1286"/>
    </location>
</feature>
<feature type="helix" evidence="22">
    <location>
        <begin position="1290"/>
        <end position="1293"/>
    </location>
</feature>
<feature type="helix" evidence="22">
    <location>
        <begin position="1300"/>
        <end position="1308"/>
    </location>
</feature>
<feature type="helix" evidence="22">
    <location>
        <begin position="1315"/>
        <end position="1332"/>
    </location>
</feature>
<feature type="helix" evidence="22">
    <location>
        <begin position="1338"/>
        <end position="1356"/>
    </location>
</feature>
<accession>P32597</accession>
<accession>D6VVG1</accession>
<accession>Q45U09</accession>